<protein>
    <recommendedName>
        <fullName evidence="1">Fluoride-specific ion channel FluC 2</fullName>
    </recommendedName>
</protein>
<organism>
    <name type="scientific">Clostridium acetobutylicum (strain ATCC 824 / DSM 792 / JCM 1419 / IAM 19013 / LMG 5710 / NBRC 13948 / NRRL B-527 / VKM B-1787 / 2291 / W)</name>
    <dbReference type="NCBI Taxonomy" id="272562"/>
    <lineage>
        <taxon>Bacteria</taxon>
        <taxon>Bacillati</taxon>
        <taxon>Bacillota</taxon>
        <taxon>Clostridia</taxon>
        <taxon>Eubacteriales</taxon>
        <taxon>Clostridiaceae</taxon>
        <taxon>Clostridium</taxon>
    </lineage>
</organism>
<keyword id="KW-1003">Cell membrane</keyword>
<keyword id="KW-0407">Ion channel</keyword>
<keyword id="KW-0406">Ion transport</keyword>
<keyword id="KW-0472">Membrane</keyword>
<keyword id="KW-0479">Metal-binding</keyword>
<keyword id="KW-1185">Reference proteome</keyword>
<keyword id="KW-0915">Sodium</keyword>
<keyword id="KW-0812">Transmembrane</keyword>
<keyword id="KW-1133">Transmembrane helix</keyword>
<keyword id="KW-0813">Transport</keyword>
<accession>Q97IQ3</accession>
<feature type="chain" id="PRO_0000110087" description="Fluoride-specific ion channel FluC 2">
    <location>
        <begin position="1"/>
        <end position="117"/>
    </location>
</feature>
<feature type="transmembrane region" description="Helical" evidence="1">
    <location>
        <begin position="4"/>
        <end position="24"/>
    </location>
</feature>
<feature type="transmembrane region" description="Helical" evidence="1">
    <location>
        <begin position="31"/>
        <end position="51"/>
    </location>
</feature>
<feature type="transmembrane region" description="Helical" evidence="1">
    <location>
        <begin position="59"/>
        <end position="79"/>
    </location>
</feature>
<feature type="transmembrane region" description="Helical" evidence="1">
    <location>
        <begin position="94"/>
        <end position="114"/>
    </location>
</feature>
<feature type="binding site" evidence="1">
    <location>
        <position position="69"/>
    </location>
    <ligand>
        <name>Na(+)</name>
        <dbReference type="ChEBI" id="CHEBI:29101"/>
        <note>structural</note>
    </ligand>
</feature>
<feature type="binding site" evidence="1">
    <location>
        <position position="72"/>
    </location>
    <ligand>
        <name>Na(+)</name>
        <dbReference type="ChEBI" id="CHEBI:29101"/>
        <note>structural</note>
    </ligand>
</feature>
<gene>
    <name evidence="1" type="primary">fluC2</name>
    <name evidence="1" type="synonym">crcB2</name>
    <name type="ordered locus">CA_C1587</name>
</gene>
<comment type="function">
    <text evidence="1">Fluoride-specific ion channel. Important for reducing fluoride concentration in the cell, thus reducing its toxicity.</text>
</comment>
<comment type="catalytic activity">
    <reaction evidence="1">
        <text>fluoride(in) = fluoride(out)</text>
        <dbReference type="Rhea" id="RHEA:76159"/>
        <dbReference type="ChEBI" id="CHEBI:17051"/>
    </reaction>
    <physiologicalReaction direction="left-to-right" evidence="1">
        <dbReference type="Rhea" id="RHEA:76160"/>
    </physiologicalReaction>
</comment>
<comment type="activity regulation">
    <text evidence="1">Na(+) is not transported, but it plays an essential structural role and its presence is essential for fluoride channel function.</text>
</comment>
<comment type="subcellular location">
    <subcellularLocation>
        <location evidence="1">Cell membrane</location>
        <topology evidence="1">Multi-pass membrane protein</topology>
    </subcellularLocation>
</comment>
<comment type="similarity">
    <text evidence="1">Belongs to the fluoride channel Fluc/FEX (TC 1.A.43) family.</text>
</comment>
<name>FLUC2_CLOAB</name>
<dbReference type="EMBL" id="AE001437">
    <property type="protein sequence ID" value="AAK79554.1"/>
    <property type="molecule type" value="Genomic_DNA"/>
</dbReference>
<dbReference type="PIR" id="G97095">
    <property type="entry name" value="G97095"/>
</dbReference>
<dbReference type="RefSeq" id="NP_348214.1">
    <property type="nucleotide sequence ID" value="NC_003030.1"/>
</dbReference>
<dbReference type="SMR" id="Q97IQ3"/>
<dbReference type="STRING" id="272562.CA_C1587"/>
<dbReference type="KEGG" id="cac:CA_C1587"/>
<dbReference type="PATRIC" id="fig|272562.8.peg.1787"/>
<dbReference type="eggNOG" id="COG0239">
    <property type="taxonomic scope" value="Bacteria"/>
</dbReference>
<dbReference type="HOGENOM" id="CLU_114342_2_3_9"/>
<dbReference type="OrthoDB" id="9815830at2"/>
<dbReference type="Proteomes" id="UP000000814">
    <property type="component" value="Chromosome"/>
</dbReference>
<dbReference type="GO" id="GO:0005886">
    <property type="term" value="C:plasma membrane"/>
    <property type="evidence" value="ECO:0007669"/>
    <property type="project" value="UniProtKB-SubCell"/>
</dbReference>
<dbReference type="GO" id="GO:0062054">
    <property type="term" value="F:fluoride channel activity"/>
    <property type="evidence" value="ECO:0007669"/>
    <property type="project" value="UniProtKB-UniRule"/>
</dbReference>
<dbReference type="GO" id="GO:0046872">
    <property type="term" value="F:metal ion binding"/>
    <property type="evidence" value="ECO:0007669"/>
    <property type="project" value="UniProtKB-KW"/>
</dbReference>
<dbReference type="GO" id="GO:0140114">
    <property type="term" value="P:cellular detoxification of fluoride"/>
    <property type="evidence" value="ECO:0007669"/>
    <property type="project" value="UniProtKB-UniRule"/>
</dbReference>
<dbReference type="HAMAP" id="MF_00454">
    <property type="entry name" value="FluC"/>
    <property type="match status" value="1"/>
</dbReference>
<dbReference type="InterPro" id="IPR003691">
    <property type="entry name" value="FluC"/>
</dbReference>
<dbReference type="NCBIfam" id="TIGR00494">
    <property type="entry name" value="crcB"/>
    <property type="match status" value="1"/>
</dbReference>
<dbReference type="NCBIfam" id="NF010828">
    <property type="entry name" value="PRK14232.1"/>
    <property type="match status" value="1"/>
</dbReference>
<dbReference type="PANTHER" id="PTHR28259">
    <property type="entry name" value="FLUORIDE EXPORT PROTEIN 1-RELATED"/>
    <property type="match status" value="1"/>
</dbReference>
<dbReference type="PANTHER" id="PTHR28259:SF16">
    <property type="entry name" value="FLUORIDE-SPECIFIC ION CHANNEL FLUC 2"/>
    <property type="match status" value="1"/>
</dbReference>
<dbReference type="Pfam" id="PF02537">
    <property type="entry name" value="CRCB"/>
    <property type="match status" value="1"/>
</dbReference>
<evidence type="ECO:0000255" key="1">
    <source>
        <dbReference type="HAMAP-Rule" id="MF_00454"/>
    </source>
</evidence>
<reference key="1">
    <citation type="journal article" date="2001" name="J. Bacteriol.">
        <title>Genome sequence and comparative analysis of the solvent-producing bacterium Clostridium acetobutylicum.</title>
        <authorList>
            <person name="Noelling J."/>
            <person name="Breton G."/>
            <person name="Omelchenko M.V."/>
            <person name="Makarova K.S."/>
            <person name="Zeng Q."/>
            <person name="Gibson R."/>
            <person name="Lee H.M."/>
            <person name="Dubois J."/>
            <person name="Qiu D."/>
            <person name="Hitti J."/>
            <person name="Wolf Y.I."/>
            <person name="Tatusov R.L."/>
            <person name="Sabathe F."/>
            <person name="Doucette-Stamm L.A."/>
            <person name="Soucaille P."/>
            <person name="Daly M.J."/>
            <person name="Bennett G.N."/>
            <person name="Koonin E.V."/>
            <person name="Smith D.R."/>
        </authorList>
    </citation>
    <scope>NUCLEOTIDE SEQUENCE [LARGE SCALE GENOMIC DNA]</scope>
    <source>
        <strain>ATCC 824 / DSM 792 / JCM 1419 / IAM 19013 / LMG 5710 / NBRC 13948 / NRRL B-527 / VKM B-1787 / 2291 / W</strain>
    </source>
</reference>
<sequence>MDYFLIGIGGACGSIVRYKIGDIISKRTKSKFPWGTFIINITGAFLLGIITKSGAGKNLSMILADGFLGAYTTFSTFMYEGFNLFENKKKLNALIYILSSIIIGILGFYMGEFISQL</sequence>
<proteinExistence type="inferred from homology"/>